<organism>
    <name type="scientific">Escherichia coli O17:K52:H18 (strain UMN026 / ExPEC)</name>
    <dbReference type="NCBI Taxonomy" id="585056"/>
    <lineage>
        <taxon>Bacteria</taxon>
        <taxon>Pseudomonadati</taxon>
        <taxon>Pseudomonadota</taxon>
        <taxon>Gammaproteobacteria</taxon>
        <taxon>Enterobacterales</taxon>
        <taxon>Enterobacteriaceae</taxon>
        <taxon>Escherichia</taxon>
    </lineage>
</organism>
<sequence length="740" mass="80300">MLKLFSAFRKNKIWDFNGGIHPPEMKTQSNGTPLRQVPLAQRFVIPLKQHIGAEGELCVSVGDKVLRGQPLTRGRGKMLPVHAPTSGTVTAIAPHSTAHPSALAELSVIIDADGEDCWIPRDGWDDYRSRSREELIERIHQFGVAGLGGAGFPTGVKLQGGGDKIETLIINAAECEPYITADDRLMQDCAAQVVEGIRILAHILQPREILIGIEDNKPQAISMLRAVLADSHDITLRVIPTKYPSGGAKQLTYILTGKQVPHGGRSSDIGVLMQNVGTAYAVKRAVIDGEPITERVVTLTGEAIARPGNVWARLGTPVRHLLNDAGFCPSADQMVIMGGPLMGFTLPWLDVPVVKITNCLLAPSANELGEPQEEQSCIRCSACADACPADLLPQQLYWFSKGQQHDKATTHNIADCIECGACAWVCPSNIPLVQYFRQEKAEIAAIRQEEKRAAEAKARFEARQARLEREKAARLERHKSAAVQPAAKDKDAIAAALARVKEKQAQATQPIVIKAGERPDNSAIIAAREARKAQARAKQAELQQTNDAATVADPRKTAVEAAIARAKARKLEQQQANAEPEEQVDPRKAAVEAAIARAKARKLEQQQANAEPEQQVDPRKAAVEAAIARAKARKLEQQQANAEPEEQVDPRKAAVEAAIARAKARKLEQQQANAEPEEQVDPRKAAVEAAIARAKARKLEQQQANAEPEEQIDPRKAAVAAAIARVQAKKAAQQKVVNED</sequence>
<feature type="chain" id="PRO_1000194513" description="Ion-translocating oxidoreductase complex subunit C">
    <location>
        <begin position="1"/>
        <end position="740"/>
    </location>
</feature>
<feature type="domain" description="4Fe-4S ferredoxin-type 1" evidence="1">
    <location>
        <begin position="369"/>
        <end position="397"/>
    </location>
</feature>
<feature type="domain" description="4Fe-4S ferredoxin-type 2" evidence="1">
    <location>
        <begin position="407"/>
        <end position="436"/>
    </location>
</feature>
<feature type="region of interest" description="Disordered" evidence="2">
    <location>
        <begin position="602"/>
        <end position="714"/>
    </location>
</feature>
<feature type="compositionally biased region" description="Low complexity" evidence="2">
    <location>
        <begin position="605"/>
        <end position="615"/>
    </location>
</feature>
<feature type="binding site" evidence="1">
    <location>
        <position position="377"/>
    </location>
    <ligand>
        <name>[4Fe-4S] cluster</name>
        <dbReference type="ChEBI" id="CHEBI:49883"/>
        <label>1</label>
    </ligand>
</feature>
<feature type="binding site" evidence="1">
    <location>
        <position position="380"/>
    </location>
    <ligand>
        <name>[4Fe-4S] cluster</name>
        <dbReference type="ChEBI" id="CHEBI:49883"/>
        <label>1</label>
    </ligand>
</feature>
<feature type="binding site" evidence="1">
    <location>
        <position position="383"/>
    </location>
    <ligand>
        <name>[4Fe-4S] cluster</name>
        <dbReference type="ChEBI" id="CHEBI:49883"/>
        <label>1</label>
    </ligand>
</feature>
<feature type="binding site" evidence="1">
    <location>
        <position position="387"/>
    </location>
    <ligand>
        <name>[4Fe-4S] cluster</name>
        <dbReference type="ChEBI" id="CHEBI:49883"/>
        <label>2</label>
    </ligand>
</feature>
<feature type="binding site" evidence="1">
    <location>
        <position position="416"/>
    </location>
    <ligand>
        <name>[4Fe-4S] cluster</name>
        <dbReference type="ChEBI" id="CHEBI:49883"/>
        <label>2</label>
    </ligand>
</feature>
<feature type="binding site" evidence="1">
    <location>
        <position position="419"/>
    </location>
    <ligand>
        <name>[4Fe-4S] cluster</name>
        <dbReference type="ChEBI" id="CHEBI:49883"/>
        <label>2</label>
    </ligand>
</feature>
<feature type="binding site" evidence="1">
    <location>
        <position position="422"/>
    </location>
    <ligand>
        <name>[4Fe-4S] cluster</name>
        <dbReference type="ChEBI" id="CHEBI:49883"/>
        <label>2</label>
    </ligand>
</feature>
<feature type="binding site" evidence="1">
    <location>
        <position position="426"/>
    </location>
    <ligand>
        <name>[4Fe-4S] cluster</name>
        <dbReference type="ChEBI" id="CHEBI:49883"/>
        <label>1</label>
    </ligand>
</feature>
<evidence type="ECO:0000255" key="1">
    <source>
        <dbReference type="HAMAP-Rule" id="MF_00461"/>
    </source>
</evidence>
<evidence type="ECO:0000256" key="2">
    <source>
        <dbReference type="SAM" id="MobiDB-lite"/>
    </source>
</evidence>
<comment type="function">
    <text evidence="1">Part of a membrane-bound complex that couples electron transfer with translocation of ions across the membrane. Required to maintain the reduced state of SoxR.</text>
</comment>
<comment type="cofactor">
    <cofactor evidence="1">
        <name>[4Fe-4S] cluster</name>
        <dbReference type="ChEBI" id="CHEBI:49883"/>
    </cofactor>
    <text evidence="1">Binds 2 [4Fe-4S] clusters per subunit.</text>
</comment>
<comment type="subunit">
    <text evidence="1">The complex is composed of six subunits: RsxA, RsxB, RsxC, RsxD, RsxE and RsxG.</text>
</comment>
<comment type="subcellular location">
    <subcellularLocation>
        <location evidence="1">Cell inner membrane</location>
        <topology evidence="1">Peripheral membrane protein</topology>
    </subcellularLocation>
</comment>
<comment type="similarity">
    <text evidence="1">Belongs to the 4Fe4S bacterial-type ferredoxin family. RnfC subfamily.</text>
</comment>
<keyword id="KW-0004">4Fe-4S</keyword>
<keyword id="KW-0997">Cell inner membrane</keyword>
<keyword id="KW-1003">Cell membrane</keyword>
<keyword id="KW-0249">Electron transport</keyword>
<keyword id="KW-0408">Iron</keyword>
<keyword id="KW-0411">Iron-sulfur</keyword>
<keyword id="KW-0472">Membrane</keyword>
<keyword id="KW-0479">Metal-binding</keyword>
<keyword id="KW-0677">Repeat</keyword>
<keyword id="KW-1278">Translocase</keyword>
<keyword id="KW-0813">Transport</keyword>
<accession>B7NB83</accession>
<protein>
    <recommendedName>
        <fullName evidence="1">Ion-translocating oxidoreductase complex subunit C</fullName>
        <ecNumber evidence="1">7.-.-.-</ecNumber>
    </recommendedName>
    <alternativeName>
        <fullName evidence="1">Rsx electron transport complex subunit C</fullName>
    </alternativeName>
</protein>
<dbReference type="EC" id="7.-.-.-" evidence="1"/>
<dbReference type="EMBL" id="CU928163">
    <property type="protein sequence ID" value="CAR13117.1"/>
    <property type="molecule type" value="Genomic_DNA"/>
</dbReference>
<dbReference type="RefSeq" id="WP_000915818.1">
    <property type="nucleotide sequence ID" value="NC_011751.1"/>
</dbReference>
<dbReference type="RefSeq" id="YP_002412649.1">
    <property type="nucleotide sequence ID" value="NC_011751.1"/>
</dbReference>
<dbReference type="SMR" id="B7NB83"/>
<dbReference type="STRING" id="585056.ECUMN_1920"/>
<dbReference type="KEGG" id="eum:ECUMN_1920"/>
<dbReference type="PATRIC" id="fig|585056.7.peg.2103"/>
<dbReference type="HOGENOM" id="CLU_010808_2_1_6"/>
<dbReference type="Proteomes" id="UP000007097">
    <property type="component" value="Chromosome"/>
</dbReference>
<dbReference type="GO" id="GO:0005886">
    <property type="term" value="C:plasma membrane"/>
    <property type="evidence" value="ECO:0007669"/>
    <property type="project" value="UniProtKB-SubCell"/>
</dbReference>
<dbReference type="GO" id="GO:0051539">
    <property type="term" value="F:4 iron, 4 sulfur cluster binding"/>
    <property type="evidence" value="ECO:0007669"/>
    <property type="project" value="UniProtKB-KW"/>
</dbReference>
<dbReference type="GO" id="GO:0009055">
    <property type="term" value="F:electron transfer activity"/>
    <property type="evidence" value="ECO:0007669"/>
    <property type="project" value="InterPro"/>
</dbReference>
<dbReference type="GO" id="GO:0046872">
    <property type="term" value="F:metal ion binding"/>
    <property type="evidence" value="ECO:0007669"/>
    <property type="project" value="UniProtKB-KW"/>
</dbReference>
<dbReference type="GO" id="GO:0022900">
    <property type="term" value="P:electron transport chain"/>
    <property type="evidence" value="ECO:0007669"/>
    <property type="project" value="UniProtKB-UniRule"/>
</dbReference>
<dbReference type="Gene3D" id="3.30.70.20">
    <property type="match status" value="1"/>
</dbReference>
<dbReference type="Gene3D" id="3.40.50.11540">
    <property type="entry name" value="NADH-ubiquinone oxidoreductase 51kDa subunit"/>
    <property type="match status" value="1"/>
</dbReference>
<dbReference type="HAMAP" id="MF_00461">
    <property type="entry name" value="RsxC_RnfC"/>
    <property type="match status" value="1"/>
</dbReference>
<dbReference type="InterPro" id="IPR017896">
    <property type="entry name" value="4Fe4S_Fe-S-bd"/>
</dbReference>
<dbReference type="InterPro" id="IPR017900">
    <property type="entry name" value="4Fe4S_Fe_S_CS"/>
</dbReference>
<dbReference type="InterPro" id="IPR010208">
    <property type="entry name" value="Ion_transpt_RnfC/RsxC"/>
</dbReference>
<dbReference type="InterPro" id="IPR011538">
    <property type="entry name" value="Nuo51_FMN-bd"/>
</dbReference>
<dbReference type="InterPro" id="IPR037225">
    <property type="entry name" value="Nuo51_FMN-bd_sf"/>
</dbReference>
<dbReference type="InterPro" id="IPR026902">
    <property type="entry name" value="RnfC_N"/>
</dbReference>
<dbReference type="InterPro" id="IPR019554">
    <property type="entry name" value="Soluble_ligand-bd"/>
</dbReference>
<dbReference type="NCBIfam" id="NF003454">
    <property type="entry name" value="PRK05035.1"/>
    <property type="match status" value="1"/>
</dbReference>
<dbReference type="NCBIfam" id="TIGR01945">
    <property type="entry name" value="rnfC"/>
    <property type="match status" value="1"/>
</dbReference>
<dbReference type="PANTHER" id="PTHR43034">
    <property type="entry name" value="ION-TRANSLOCATING OXIDOREDUCTASE COMPLEX SUBUNIT C"/>
    <property type="match status" value="1"/>
</dbReference>
<dbReference type="PANTHER" id="PTHR43034:SF2">
    <property type="entry name" value="ION-TRANSLOCATING OXIDOREDUCTASE COMPLEX SUBUNIT C"/>
    <property type="match status" value="1"/>
</dbReference>
<dbReference type="Pfam" id="PF01512">
    <property type="entry name" value="Complex1_51K"/>
    <property type="match status" value="1"/>
</dbReference>
<dbReference type="Pfam" id="PF12838">
    <property type="entry name" value="Fer4_7"/>
    <property type="match status" value="1"/>
</dbReference>
<dbReference type="Pfam" id="PF13375">
    <property type="entry name" value="RnfC_N"/>
    <property type="match status" value="1"/>
</dbReference>
<dbReference type="Pfam" id="PF10531">
    <property type="entry name" value="SLBB"/>
    <property type="match status" value="1"/>
</dbReference>
<dbReference type="SUPFAM" id="SSF46548">
    <property type="entry name" value="alpha-helical ferredoxin"/>
    <property type="match status" value="1"/>
</dbReference>
<dbReference type="SUPFAM" id="SSF142019">
    <property type="entry name" value="Nqo1 FMN-binding domain-like"/>
    <property type="match status" value="1"/>
</dbReference>
<dbReference type="PROSITE" id="PS00198">
    <property type="entry name" value="4FE4S_FER_1"/>
    <property type="match status" value="2"/>
</dbReference>
<dbReference type="PROSITE" id="PS51379">
    <property type="entry name" value="4FE4S_FER_2"/>
    <property type="match status" value="2"/>
</dbReference>
<reference key="1">
    <citation type="journal article" date="2009" name="PLoS Genet.">
        <title>Organised genome dynamics in the Escherichia coli species results in highly diverse adaptive paths.</title>
        <authorList>
            <person name="Touchon M."/>
            <person name="Hoede C."/>
            <person name="Tenaillon O."/>
            <person name="Barbe V."/>
            <person name="Baeriswyl S."/>
            <person name="Bidet P."/>
            <person name="Bingen E."/>
            <person name="Bonacorsi S."/>
            <person name="Bouchier C."/>
            <person name="Bouvet O."/>
            <person name="Calteau A."/>
            <person name="Chiapello H."/>
            <person name="Clermont O."/>
            <person name="Cruveiller S."/>
            <person name="Danchin A."/>
            <person name="Diard M."/>
            <person name="Dossat C."/>
            <person name="Karoui M.E."/>
            <person name="Frapy E."/>
            <person name="Garry L."/>
            <person name="Ghigo J.M."/>
            <person name="Gilles A.M."/>
            <person name="Johnson J."/>
            <person name="Le Bouguenec C."/>
            <person name="Lescat M."/>
            <person name="Mangenot S."/>
            <person name="Martinez-Jehanne V."/>
            <person name="Matic I."/>
            <person name="Nassif X."/>
            <person name="Oztas S."/>
            <person name="Petit M.A."/>
            <person name="Pichon C."/>
            <person name="Rouy Z."/>
            <person name="Ruf C.S."/>
            <person name="Schneider D."/>
            <person name="Tourret J."/>
            <person name="Vacherie B."/>
            <person name="Vallenet D."/>
            <person name="Medigue C."/>
            <person name="Rocha E.P.C."/>
            <person name="Denamur E."/>
        </authorList>
    </citation>
    <scope>NUCLEOTIDE SEQUENCE [LARGE SCALE GENOMIC DNA]</scope>
    <source>
        <strain>UMN026 / ExPEC</strain>
    </source>
</reference>
<name>RSXC_ECOLU</name>
<proteinExistence type="inferred from homology"/>
<gene>
    <name evidence="1" type="primary">rsxC</name>
    <name type="ordered locus">ECUMN_1920</name>
</gene>